<keyword id="KW-0106">Calcium</keyword>
<keyword id="KW-1003">Cell membrane</keyword>
<keyword id="KW-0966">Cell projection</keyword>
<keyword id="KW-0963">Cytoplasm</keyword>
<keyword id="KW-0344">Guanine-nucleotide releasing factor</keyword>
<keyword id="KW-0472">Membrane</keyword>
<keyword id="KW-0479">Metal-binding</keyword>
<keyword id="KW-0597">Phosphoprotein</keyword>
<keyword id="KW-1185">Reference proteome</keyword>
<keyword id="KW-0677">Repeat</keyword>
<keyword id="KW-0770">Synapse</keyword>
<keyword id="KW-0771">Synaptosome</keyword>
<keyword id="KW-0862">Zinc</keyword>
<keyword id="KW-0863">Zinc-finger</keyword>
<evidence type="ECO:0000250" key="1"/>
<evidence type="ECO:0000250" key="2">
    <source>
        <dbReference type="UniProtKB" id="P0C643"/>
    </source>
</evidence>
<evidence type="ECO:0000250" key="3">
    <source>
        <dbReference type="UniProtKB" id="Q7LDG7"/>
    </source>
</evidence>
<evidence type="ECO:0000250" key="4">
    <source>
        <dbReference type="UniProtKB" id="Q9QUG9"/>
    </source>
</evidence>
<evidence type="ECO:0000255" key="5">
    <source>
        <dbReference type="PROSITE-ProRule" id="PRU00135"/>
    </source>
</evidence>
<evidence type="ECO:0000255" key="6">
    <source>
        <dbReference type="PROSITE-ProRule" id="PRU00168"/>
    </source>
</evidence>
<evidence type="ECO:0000255" key="7">
    <source>
        <dbReference type="PROSITE-ProRule" id="PRU00226"/>
    </source>
</evidence>
<evidence type="ECO:0000255" key="8">
    <source>
        <dbReference type="PROSITE-ProRule" id="PRU00448"/>
    </source>
</evidence>
<evidence type="ECO:0000256" key="9">
    <source>
        <dbReference type="SAM" id="MobiDB-lite"/>
    </source>
</evidence>
<evidence type="ECO:0000269" key="10">
    <source>
    </source>
</evidence>
<evidence type="ECO:0000305" key="11"/>
<evidence type="ECO:0000305" key="12">
    <source>
    </source>
</evidence>
<organism>
    <name type="scientific">Bos taurus</name>
    <name type="common">Bovine</name>
    <dbReference type="NCBI Taxonomy" id="9913"/>
    <lineage>
        <taxon>Eukaryota</taxon>
        <taxon>Metazoa</taxon>
        <taxon>Chordata</taxon>
        <taxon>Craniata</taxon>
        <taxon>Vertebrata</taxon>
        <taxon>Euteleostomi</taxon>
        <taxon>Mammalia</taxon>
        <taxon>Eutheria</taxon>
        <taxon>Laurasiatheria</taxon>
        <taxon>Artiodactyla</taxon>
        <taxon>Ruminantia</taxon>
        <taxon>Pecora</taxon>
        <taxon>Bovidae</taxon>
        <taxon>Bovinae</taxon>
        <taxon>Bos</taxon>
    </lineage>
</organism>
<name>GRP2_BOVIN</name>
<reference key="1">
    <citation type="journal article" date="2007" name="Vet. Pathol.">
        <title>Calcium diacylglycerol guanine nucleotide exchange factor I (CalDAG-GEFI) gene mutations in a thrombopathic Simmental calf.</title>
        <authorList>
            <person name="Boudreaux M.K."/>
            <person name="Schmutz S.M."/>
            <person name="French P.S. Jr."/>
        </authorList>
    </citation>
    <scope>NUCLEOTIDE SEQUENCE [MRNA]</scope>
    <scope>INVOLVEMENT IN SIMMENTAL THROMBOPATHIA</scope>
    <scope>VARIANTS LEU-218 AND PRO-234</scope>
</reference>
<sequence length="608" mass="69180">MAGTLDLDKGCTVEELLRGCIEAFDDSGKVRDPQLVRMFLMMHPWYIPSSQLAAKLLHIYQQSRKDNSSSLQVKTCHLVRYWISAFPAEFDLNPELAEQIKELKALLDQEGNRRHSSLIDIENVPTYKWKRQVTQRNPVEQKKRKMSLLFDHLEPLELAAHLTYLEYRSFCKILFQDYHSFVTHGCTVDNPVLERFISLFNSVSQWVQLMILSKPTAPQRAGVITHFVHVAEELLHLQNFNTLMAVVGGLSHSSISRLKETHSHVSPETIKLWEGLTELVTATGNYGNYRRRLAACVGFRFPILGVHLKDLVALQLALPDWLDPARTRLNGAKMKQLFSILEELAMVTSLRPPVQANPDLLSLLMVSLDQYQTEDELYQLSLQREPRSKSSPTSPTTCTPPPRPPVLEEWTSAAKPKLDQAIMVEHIEKMVESVFRNFDVDGDGHISQEEFQIIRGNFPYLSAFGDLDQNQDGCISKEEMVSYFLRSSSMLGGRMGFVHNFHESNSLRPVACRHCKALILGIYKQGLKCRACGVNCHKQCKDRLSVECRRRAQSMSLEGSAPSPSPTHTHHRAFSFSLPRPGRRGSRPPEIREEEVQTVEDGVFDIHL</sequence>
<protein>
    <recommendedName>
        <fullName>RAS guanyl-releasing protein 2</fullName>
    </recommendedName>
    <alternativeName>
        <fullName>Calcium and DAG-regulated guanine nucleotide exchange factor I</fullName>
        <shortName>CalDAG-GEFI</shortName>
    </alternativeName>
</protein>
<proteinExistence type="evidence at transcript level"/>
<comment type="function">
    <text evidence="3">Functions as a calcium- and DAG-regulated nucleotide exchange factor specifically activating Rap through the exchange of bound GDP for GTP. May also activate other GTPases such as RRAS, RRAS2, NRAS, KRAS but not HRAS. Functions in aggregation of platelets and adhesion of T-lymphocytes and neutrophils probably through inside-out integrin activation. May function in the muscarinic acetylcholine receptor M1/CHRM1 signaling pathway.</text>
</comment>
<comment type="subunit">
    <text evidence="1">Forms a signaling complex with RAP1 and BRAF. Interacts with RAP1. Interacts with F-actin (By similarity).</text>
</comment>
<comment type="subcellular location">
    <subcellularLocation>
        <location evidence="1">Cytoplasm</location>
        <location evidence="1">Cytosol</location>
    </subcellularLocation>
    <subcellularLocation>
        <location evidence="1">Cell membrane</location>
        <topology evidence="1">Peripheral membrane protein</topology>
    </subcellularLocation>
    <subcellularLocation>
        <location evidence="1">Synapse</location>
        <location evidence="1">Synaptosome</location>
    </subcellularLocation>
    <subcellularLocation>
        <location evidence="11">Cell projection</location>
        <location evidence="11">Ruffle membrane</location>
        <topology evidence="11">Peripheral membrane protein</topology>
    </subcellularLocation>
    <text evidence="1">Found both in the cytosol and associated with membranes. Enriched at juxtamembrane areas and membrane ruffles. Localizes to the cell bodies and axons of striatal neurons.</text>
</comment>
<comment type="domain">
    <text evidence="1">The N-terminal Ras-GEF domain mediates association with F-actin.</text>
</comment>
<comment type="disease">
    <text evidence="12">Defects in RASGRP2 may be the cause of Simmental thrombopathia. An inherited platelet disorder first described in Simmental cattle and characterized by mild to severe bleeding episodes.</text>
</comment>
<comment type="similarity">
    <text evidence="11">Belongs to the RASGRP family.</text>
</comment>
<accession>A6N9I4</accession>
<dbReference type="EMBL" id="EF633475">
    <property type="protein sequence ID" value="ABR27454.1"/>
    <property type="molecule type" value="mRNA"/>
</dbReference>
<dbReference type="RefSeq" id="NP_001093416.1">
    <property type="nucleotide sequence ID" value="NM_001099946.1"/>
</dbReference>
<dbReference type="RefSeq" id="XP_010819374.2">
    <property type="nucleotide sequence ID" value="XM_010821072.4"/>
</dbReference>
<dbReference type="RefSeq" id="XP_010819376.2">
    <property type="nucleotide sequence ID" value="XM_010821074.4"/>
</dbReference>
<dbReference type="RefSeq" id="XP_010819377.2">
    <property type="nucleotide sequence ID" value="XM_010821075.4"/>
</dbReference>
<dbReference type="RefSeq" id="XP_059738837.1">
    <property type="nucleotide sequence ID" value="XM_059882854.1"/>
</dbReference>
<dbReference type="SMR" id="A6N9I4"/>
<dbReference type="FunCoup" id="A6N9I4">
    <property type="interactions" value="536"/>
</dbReference>
<dbReference type="STRING" id="9913.ENSBTAP00000001368"/>
<dbReference type="PaxDb" id="9913-ENSBTAP00000001368"/>
<dbReference type="GeneID" id="512056"/>
<dbReference type="KEGG" id="bta:512056"/>
<dbReference type="CTD" id="10235"/>
<dbReference type="VEuPathDB" id="HostDB:ENSBTAG00000001029"/>
<dbReference type="eggNOG" id="KOG3417">
    <property type="taxonomic scope" value="Eukaryota"/>
</dbReference>
<dbReference type="InParanoid" id="A6N9I4"/>
<dbReference type="OrthoDB" id="74314at2759"/>
<dbReference type="Reactome" id="R-BTA-354192">
    <property type="pathway name" value="Integrin signaling"/>
</dbReference>
<dbReference type="Reactome" id="R-BTA-392517">
    <property type="pathway name" value="Rap1 signalling"/>
</dbReference>
<dbReference type="Proteomes" id="UP000009136">
    <property type="component" value="Chromosome 29"/>
</dbReference>
<dbReference type="Bgee" id="ENSBTAG00000001029">
    <property type="expression patterns" value="Expressed in retropharyngeal lymph node and 105 other cell types or tissues"/>
</dbReference>
<dbReference type="GO" id="GO:0005829">
    <property type="term" value="C:cytosol"/>
    <property type="evidence" value="ECO:0007669"/>
    <property type="project" value="UniProtKB-SubCell"/>
</dbReference>
<dbReference type="GO" id="GO:0043005">
    <property type="term" value="C:neuron projection"/>
    <property type="evidence" value="ECO:0007669"/>
    <property type="project" value="UniProtKB-KW"/>
</dbReference>
<dbReference type="GO" id="GO:0005886">
    <property type="term" value="C:plasma membrane"/>
    <property type="evidence" value="ECO:0000318"/>
    <property type="project" value="GO_Central"/>
</dbReference>
<dbReference type="GO" id="GO:0032587">
    <property type="term" value="C:ruffle membrane"/>
    <property type="evidence" value="ECO:0007669"/>
    <property type="project" value="UniProtKB-SubCell"/>
</dbReference>
<dbReference type="GO" id="GO:0045202">
    <property type="term" value="C:synapse"/>
    <property type="evidence" value="ECO:0007669"/>
    <property type="project" value="UniProtKB-SubCell"/>
</dbReference>
<dbReference type="GO" id="GO:0005509">
    <property type="term" value="F:calcium ion binding"/>
    <property type="evidence" value="ECO:0007669"/>
    <property type="project" value="InterPro"/>
</dbReference>
<dbReference type="GO" id="GO:0005085">
    <property type="term" value="F:guanyl-nucleotide exchange factor activity"/>
    <property type="evidence" value="ECO:0000318"/>
    <property type="project" value="GO_Central"/>
</dbReference>
<dbReference type="GO" id="GO:0008270">
    <property type="term" value="F:zinc ion binding"/>
    <property type="evidence" value="ECO:0007669"/>
    <property type="project" value="UniProtKB-KW"/>
</dbReference>
<dbReference type="GO" id="GO:0007265">
    <property type="term" value="P:Ras protein signal transduction"/>
    <property type="evidence" value="ECO:0000318"/>
    <property type="project" value="GO_Central"/>
</dbReference>
<dbReference type="CDD" id="cd20861">
    <property type="entry name" value="C1_RASGRP2"/>
    <property type="match status" value="1"/>
</dbReference>
<dbReference type="CDD" id="cd00051">
    <property type="entry name" value="EFh"/>
    <property type="match status" value="1"/>
</dbReference>
<dbReference type="CDD" id="cd00155">
    <property type="entry name" value="RasGEF"/>
    <property type="match status" value="1"/>
</dbReference>
<dbReference type="CDD" id="cd06224">
    <property type="entry name" value="REM"/>
    <property type="match status" value="1"/>
</dbReference>
<dbReference type="FunFam" id="3.30.60.20:FF:000023">
    <property type="entry name" value="RAS guanyl-releasing protein 1 isoform X1"/>
    <property type="match status" value="1"/>
</dbReference>
<dbReference type="FunFam" id="1.20.870.10:FF:000011">
    <property type="entry name" value="RAS guanyl-releasing protein 2 isoform X1"/>
    <property type="match status" value="1"/>
</dbReference>
<dbReference type="FunFam" id="1.10.840.10:FF:000003">
    <property type="entry name" value="Ras guanyl-releasing protein 3 isoform 1"/>
    <property type="match status" value="1"/>
</dbReference>
<dbReference type="Gene3D" id="3.30.60.20">
    <property type="match status" value="1"/>
</dbReference>
<dbReference type="Gene3D" id="1.10.238.10">
    <property type="entry name" value="EF-hand"/>
    <property type="match status" value="1"/>
</dbReference>
<dbReference type="Gene3D" id="1.10.840.10">
    <property type="entry name" value="Ras guanine-nucleotide exchange factors catalytic domain"/>
    <property type="match status" value="1"/>
</dbReference>
<dbReference type="Gene3D" id="1.20.870.10">
    <property type="entry name" value="Son of sevenless (SoS) protein Chain: S domain 1"/>
    <property type="match status" value="1"/>
</dbReference>
<dbReference type="InterPro" id="IPR046349">
    <property type="entry name" value="C1-like_sf"/>
</dbReference>
<dbReference type="InterPro" id="IPR011992">
    <property type="entry name" value="EF-hand-dom_pair"/>
</dbReference>
<dbReference type="InterPro" id="IPR018247">
    <property type="entry name" value="EF_Hand_1_Ca_BS"/>
</dbReference>
<dbReference type="InterPro" id="IPR002048">
    <property type="entry name" value="EF_hand_dom"/>
</dbReference>
<dbReference type="InterPro" id="IPR002219">
    <property type="entry name" value="PE/DAG-bd"/>
</dbReference>
<dbReference type="InterPro" id="IPR008937">
    <property type="entry name" value="Ras-like_GEF"/>
</dbReference>
<dbReference type="InterPro" id="IPR000651">
    <property type="entry name" value="Ras-like_Gua-exchang_fac_N"/>
</dbReference>
<dbReference type="InterPro" id="IPR023578">
    <property type="entry name" value="Ras_GEF_dom_sf"/>
</dbReference>
<dbReference type="InterPro" id="IPR001895">
    <property type="entry name" value="RASGEF_cat_dom"/>
</dbReference>
<dbReference type="InterPro" id="IPR036964">
    <property type="entry name" value="RASGEF_cat_dom_sf"/>
</dbReference>
<dbReference type="PANTHER" id="PTHR23113">
    <property type="entry name" value="GUANINE NUCLEOTIDE EXCHANGE FACTOR"/>
    <property type="match status" value="1"/>
</dbReference>
<dbReference type="PANTHER" id="PTHR23113:SF16">
    <property type="entry name" value="RAS GUANYL-RELEASING PROTEIN 2"/>
    <property type="match status" value="1"/>
</dbReference>
<dbReference type="Pfam" id="PF00130">
    <property type="entry name" value="C1_1"/>
    <property type="match status" value="1"/>
</dbReference>
<dbReference type="Pfam" id="PF13202">
    <property type="entry name" value="EF-hand_5"/>
    <property type="match status" value="2"/>
</dbReference>
<dbReference type="Pfam" id="PF00617">
    <property type="entry name" value="RasGEF"/>
    <property type="match status" value="1"/>
</dbReference>
<dbReference type="Pfam" id="PF00618">
    <property type="entry name" value="RasGEF_N"/>
    <property type="match status" value="1"/>
</dbReference>
<dbReference type="SMART" id="SM00109">
    <property type="entry name" value="C1"/>
    <property type="match status" value="1"/>
</dbReference>
<dbReference type="SMART" id="SM00054">
    <property type="entry name" value="EFh"/>
    <property type="match status" value="2"/>
</dbReference>
<dbReference type="SMART" id="SM00147">
    <property type="entry name" value="RasGEF"/>
    <property type="match status" value="1"/>
</dbReference>
<dbReference type="SMART" id="SM00229">
    <property type="entry name" value="RasGEFN"/>
    <property type="match status" value="1"/>
</dbReference>
<dbReference type="SUPFAM" id="SSF57889">
    <property type="entry name" value="Cysteine-rich domain"/>
    <property type="match status" value="1"/>
</dbReference>
<dbReference type="SUPFAM" id="SSF47473">
    <property type="entry name" value="EF-hand"/>
    <property type="match status" value="1"/>
</dbReference>
<dbReference type="SUPFAM" id="SSF48366">
    <property type="entry name" value="Ras GEF"/>
    <property type="match status" value="1"/>
</dbReference>
<dbReference type="PROSITE" id="PS00018">
    <property type="entry name" value="EF_HAND_1"/>
    <property type="match status" value="2"/>
</dbReference>
<dbReference type="PROSITE" id="PS50222">
    <property type="entry name" value="EF_HAND_2"/>
    <property type="match status" value="2"/>
</dbReference>
<dbReference type="PROSITE" id="PS50009">
    <property type="entry name" value="RASGEF_CAT"/>
    <property type="match status" value="1"/>
</dbReference>
<dbReference type="PROSITE" id="PS50212">
    <property type="entry name" value="RASGEF_NTER"/>
    <property type="match status" value="1"/>
</dbReference>
<dbReference type="PROSITE" id="PS00479">
    <property type="entry name" value="ZF_DAG_PE_1"/>
    <property type="match status" value="1"/>
</dbReference>
<dbReference type="PROSITE" id="PS50081">
    <property type="entry name" value="ZF_DAG_PE_2"/>
    <property type="match status" value="1"/>
</dbReference>
<gene>
    <name type="primary">RASGRP2</name>
</gene>
<feature type="chain" id="PRO_0000315607" description="RAS guanyl-releasing protein 2">
    <location>
        <begin position="1"/>
        <end position="608"/>
    </location>
</feature>
<feature type="domain" description="N-terminal Ras-GEF" evidence="5">
    <location>
        <begin position="4"/>
        <end position="126"/>
    </location>
</feature>
<feature type="domain" description="Ras-GEF" evidence="6">
    <location>
        <begin position="154"/>
        <end position="387"/>
    </location>
</feature>
<feature type="domain" description="EF-hand 1" evidence="8">
    <location>
        <begin position="426"/>
        <end position="461"/>
    </location>
</feature>
<feature type="domain" description="EF-hand 2" evidence="8">
    <location>
        <begin position="463"/>
        <end position="490"/>
    </location>
</feature>
<feature type="zinc finger region" description="Phorbol-ester/DAG-type" evidence="7">
    <location>
        <begin position="498"/>
        <end position="548"/>
    </location>
</feature>
<feature type="region of interest" description="Disordered" evidence="9">
    <location>
        <begin position="382"/>
        <end position="407"/>
    </location>
</feature>
<feature type="region of interest" description="Disordered" evidence="9">
    <location>
        <begin position="556"/>
        <end position="591"/>
    </location>
</feature>
<feature type="binding site" evidence="8">
    <location>
        <position position="439"/>
    </location>
    <ligand>
        <name>Ca(2+)</name>
        <dbReference type="ChEBI" id="CHEBI:29108"/>
        <label>1</label>
    </ligand>
</feature>
<feature type="binding site" evidence="8">
    <location>
        <position position="441"/>
    </location>
    <ligand>
        <name>Ca(2+)</name>
        <dbReference type="ChEBI" id="CHEBI:29108"/>
        <label>1</label>
    </ligand>
</feature>
<feature type="binding site" evidence="8">
    <location>
        <position position="443"/>
    </location>
    <ligand>
        <name>Ca(2+)</name>
        <dbReference type="ChEBI" id="CHEBI:29108"/>
        <label>1</label>
    </ligand>
</feature>
<feature type="binding site" evidence="8">
    <location>
        <position position="445"/>
    </location>
    <ligand>
        <name>Ca(2+)</name>
        <dbReference type="ChEBI" id="CHEBI:29108"/>
        <label>1</label>
    </ligand>
</feature>
<feature type="binding site" evidence="8">
    <location>
        <position position="450"/>
    </location>
    <ligand>
        <name>Ca(2+)</name>
        <dbReference type="ChEBI" id="CHEBI:29108"/>
        <label>1</label>
    </ligand>
</feature>
<feature type="binding site" evidence="8">
    <location>
        <position position="468"/>
    </location>
    <ligand>
        <name>Ca(2+)</name>
        <dbReference type="ChEBI" id="CHEBI:29108"/>
        <label>2</label>
    </ligand>
</feature>
<feature type="binding site" evidence="8">
    <location>
        <position position="470"/>
    </location>
    <ligand>
        <name>Ca(2+)</name>
        <dbReference type="ChEBI" id="CHEBI:29108"/>
        <label>2</label>
    </ligand>
</feature>
<feature type="binding site" evidence="8">
    <location>
        <position position="472"/>
    </location>
    <ligand>
        <name>Ca(2+)</name>
        <dbReference type="ChEBI" id="CHEBI:29108"/>
        <label>2</label>
    </ligand>
</feature>
<feature type="binding site" evidence="8">
    <location>
        <position position="474"/>
    </location>
    <ligand>
        <name>Ca(2+)</name>
        <dbReference type="ChEBI" id="CHEBI:29108"/>
        <label>2</label>
    </ligand>
</feature>
<feature type="binding site" evidence="8">
    <location>
        <position position="479"/>
    </location>
    <ligand>
        <name>Ca(2+)</name>
        <dbReference type="ChEBI" id="CHEBI:29108"/>
        <label>2</label>
    </ligand>
</feature>
<feature type="modified residue" description="Phosphoserine" evidence="4">
    <location>
        <position position="116"/>
    </location>
</feature>
<feature type="modified residue" description="Phosphoserine" evidence="4">
    <location>
        <position position="117"/>
    </location>
</feature>
<feature type="modified residue" description="Phosphoserine" evidence="4">
    <location>
        <position position="147"/>
    </location>
</feature>
<feature type="modified residue" description="Phosphoserine" evidence="4">
    <location>
        <position position="554"/>
    </location>
</feature>
<feature type="modified residue" description="Phosphoserine" evidence="2">
    <location>
        <position position="575"/>
    </location>
</feature>
<feature type="sequence variant" evidence="10">
    <original>P</original>
    <variation>L</variation>
    <location>
        <position position="218"/>
    </location>
</feature>
<feature type="sequence variant" description="Homozygous in a thrombopathic calf; heterozygous in other calves." evidence="10">
    <original>L</original>
    <variation>P</variation>
    <location>
        <position position="234"/>
    </location>
</feature>